<dbReference type="EC" id="5.5.1.16"/>
<dbReference type="EMBL" id="AL123456">
    <property type="protein sequence ID" value="CCP46198.1"/>
    <property type="molecule type" value="Genomic_DNA"/>
</dbReference>
<dbReference type="PIR" id="H70972">
    <property type="entry name" value="H70972"/>
</dbReference>
<dbReference type="RefSeq" id="NP_217894.1">
    <property type="nucleotide sequence ID" value="NC_000962.3"/>
</dbReference>
<dbReference type="RefSeq" id="WP_003417905.1">
    <property type="nucleotide sequence ID" value="NZ_NVQJ01000052.1"/>
</dbReference>
<dbReference type="PDB" id="6VPT">
    <property type="method" value="X-ray"/>
    <property type="resolution" value="2.72 A"/>
    <property type="chains" value="A=1-501"/>
</dbReference>
<dbReference type="PDBsum" id="6VPT"/>
<dbReference type="SMR" id="O50406"/>
<dbReference type="STRING" id="83332.Rv3377c"/>
<dbReference type="SwissLipids" id="SLP:000001170"/>
<dbReference type="PaxDb" id="83332-Rv3377c"/>
<dbReference type="DNASU" id="888073"/>
<dbReference type="GeneID" id="888073"/>
<dbReference type="KEGG" id="mtu:Rv3377c"/>
<dbReference type="KEGG" id="mtv:RVBD_3377c"/>
<dbReference type="TubercuList" id="Rv3377c"/>
<dbReference type="eggNOG" id="COG1657">
    <property type="taxonomic scope" value="Bacteria"/>
</dbReference>
<dbReference type="InParanoid" id="O50406"/>
<dbReference type="OrthoDB" id="9758578at2"/>
<dbReference type="PhylomeDB" id="O50406"/>
<dbReference type="BioCyc" id="MetaCyc:G185E-7653-MONOMER"/>
<dbReference type="Proteomes" id="UP000001584">
    <property type="component" value="Chromosome"/>
</dbReference>
<dbReference type="GO" id="GO:0035439">
    <property type="term" value="F:halimadienyl-diphosphate synthase activity"/>
    <property type="evidence" value="ECO:0000314"/>
    <property type="project" value="MTBBASE"/>
</dbReference>
<dbReference type="GO" id="GO:0000287">
    <property type="term" value="F:magnesium ion binding"/>
    <property type="evidence" value="ECO:0000314"/>
    <property type="project" value="MTBBASE"/>
</dbReference>
<dbReference type="GO" id="GO:0010333">
    <property type="term" value="F:terpene synthase activity"/>
    <property type="evidence" value="ECO:0007669"/>
    <property type="project" value="InterPro"/>
</dbReference>
<dbReference type="GO" id="GO:0010350">
    <property type="term" value="P:cellular response to magnesium starvation"/>
    <property type="evidence" value="ECO:0000314"/>
    <property type="project" value="MTBBASE"/>
</dbReference>
<dbReference type="GO" id="GO:0033385">
    <property type="term" value="P:geranylgeranyl diphosphate metabolic process"/>
    <property type="evidence" value="ECO:0000314"/>
    <property type="project" value="MTBBASE"/>
</dbReference>
<dbReference type="GO" id="GO:0035440">
    <property type="term" value="P:tuberculosinol biosynthetic process"/>
    <property type="evidence" value="ECO:0000314"/>
    <property type="project" value="MTBBASE"/>
</dbReference>
<dbReference type="CDD" id="cd00688">
    <property type="entry name" value="ISOPREN_C2_like"/>
    <property type="match status" value="1"/>
</dbReference>
<dbReference type="FunFam" id="1.50.10.160:FF:000004">
    <property type="entry name" value="Type B diterpene cyclase"/>
    <property type="match status" value="1"/>
</dbReference>
<dbReference type="Gene3D" id="1.50.10.160">
    <property type="match status" value="1"/>
</dbReference>
<dbReference type="Gene3D" id="1.50.10.20">
    <property type="match status" value="1"/>
</dbReference>
<dbReference type="InterPro" id="IPR032696">
    <property type="entry name" value="SQ_cyclase_C"/>
</dbReference>
<dbReference type="InterPro" id="IPR050148">
    <property type="entry name" value="Terpene_synthase-like"/>
</dbReference>
<dbReference type="InterPro" id="IPR008930">
    <property type="entry name" value="Terpenoid_cyclase/PrenylTrfase"/>
</dbReference>
<dbReference type="PANTHER" id="PTHR31739">
    <property type="entry name" value="ENT-COPALYL DIPHOSPHATE SYNTHASE, CHLOROPLASTIC"/>
    <property type="match status" value="1"/>
</dbReference>
<dbReference type="PANTHER" id="PTHR31739:SF3">
    <property type="entry name" value="ENT-KAUR-16-ENE SYNTHASE, CHLOROPLASTIC"/>
    <property type="match status" value="1"/>
</dbReference>
<dbReference type="Pfam" id="PF13243">
    <property type="entry name" value="SQHop_cyclase_C"/>
    <property type="match status" value="1"/>
</dbReference>
<dbReference type="SUPFAM" id="SSF48239">
    <property type="entry name" value="Terpenoid cyclases/Protein prenyltransferases"/>
    <property type="match status" value="2"/>
</dbReference>
<accession>O50406</accession>
<accession>F2GEC3</accession>
<accession>L0TCC7</accession>
<sequence>METFRTLLAKAALGNGISSTAYDTAWVAKLGQLDDELSDLALNWLCERQLPDGSWGAEFPFCYEDRLLSTLAAMISLTSNKHRRRRAAQVEKGLLALKNLTSGAFEGPQLDIKDATVGFELIAPTLMAEAARLGLAICHEESILGELVGVREQKLRKLGGSKINKHITAAFSVELAGQDGVGMLDVDNLQETNGSVKYSPSASAYFALHVKPGDKRALAYISSIIQAGDGGAPAFYQAEIFEIVWSLWNLSRTDIDLSDPEIVRTYLPYLDHVEQHWVRGRGVGWTGNSTLEDCDTTSVAYDVLSKFGRSPDIGAVLQFEDADWFRTYFHEVGPSISTNVHVLGALKQAGYDKCHPRVRKVLEFIRSSKEPGRFCWRDKWHRSAYYTTAHLICAASNYDDALCSDAIGWILNTQRPDGSWGFFDGQATAEETAYCIQALAHWQRHSGTSLSAQISRAGGWLSQHCEPPYAPLWIAKTLYCSATVVKAAILSALRLVDESNQ</sequence>
<evidence type="ECO:0000269" key="1">
    <source>
    </source>
</evidence>
<evidence type="ECO:0000269" key="2">
    <source>
    </source>
</evidence>
<evidence type="ECO:0000305" key="3"/>
<evidence type="ECO:0007829" key="4">
    <source>
        <dbReference type="PDB" id="6VPT"/>
    </source>
</evidence>
<gene>
    <name type="ordered locus">Rv3377c</name>
</gene>
<feature type="chain" id="PRO_0000416457" description="Type B diterpene cyclase">
    <location>
        <begin position="1"/>
        <end position="501"/>
    </location>
</feature>
<feature type="mutagenesis site" description="No change." evidence="2">
    <original>E</original>
    <variation>Q</variation>
    <location>
        <position position="292"/>
    </location>
</feature>
<feature type="mutagenesis site" description="Loss of cyclase activity." evidence="2">
    <original>D</original>
    <variation>E</variation>
    <location>
        <position position="293"/>
    </location>
</feature>
<feature type="mutagenesis site" description="Loss of cyclase activity." evidence="2">
    <original>D</original>
    <variation>N</variation>
    <location>
        <position position="293"/>
    </location>
</feature>
<feature type="mutagenesis site" description="Loss of cyclase activity." evidence="2">
    <original>D</original>
    <variation>N</variation>
    <location>
        <position position="295"/>
    </location>
</feature>
<feature type="mutagenesis site" description="Loss of cyclase activity." evidence="2">
    <original>D</original>
    <variation>Q</variation>
    <location>
        <position position="295"/>
    </location>
</feature>
<feature type="mutagenesis site" description="Loss of cyclase activity." evidence="2">
    <original>T</original>
    <variation>D</variation>
    <location>
        <position position="296"/>
    </location>
</feature>
<feature type="mutagenesis site" description="Loss of cyclase activity." evidence="2">
    <original>T</original>
    <variation>N</variation>
    <location>
        <position position="296"/>
    </location>
</feature>
<feature type="mutagenesis site" description="Loss of cyclase activity." evidence="2">
    <original>T</original>
    <variation>S</variation>
    <location>
        <position position="296"/>
    </location>
</feature>
<feature type="mutagenesis site" description="Loss of cyclase activity." evidence="2">
    <original>T</original>
    <variation>V</variation>
    <location>
        <position position="296"/>
    </location>
</feature>
<feature type="mutagenesis site" description="Loss of cyclase activity." evidence="2">
    <original>T</original>
    <variation>S</variation>
    <location>
        <position position="297"/>
    </location>
</feature>
<feature type="mutagenesis site" description="Loss of cyclase activity." evidence="2">
    <original>T</original>
    <variation>V</variation>
    <location>
        <position position="297"/>
    </location>
</feature>
<feature type="helix" evidence="4">
    <location>
        <begin position="4"/>
        <end position="11"/>
    </location>
</feature>
<feature type="helix" evidence="4">
    <location>
        <begin position="21"/>
        <end position="27"/>
    </location>
</feature>
<feature type="helix" evidence="4">
    <location>
        <begin position="28"/>
        <end position="30"/>
    </location>
</feature>
<feature type="turn" evidence="4">
    <location>
        <begin position="31"/>
        <end position="33"/>
    </location>
</feature>
<feature type="helix" evidence="4">
    <location>
        <begin position="35"/>
        <end position="47"/>
    </location>
</feature>
<feature type="strand" evidence="4">
    <location>
        <begin position="58"/>
        <end position="60"/>
    </location>
</feature>
<feature type="helix" evidence="4">
    <location>
        <begin position="63"/>
        <end position="79"/>
    </location>
</feature>
<feature type="helix" evidence="4">
    <location>
        <begin position="83"/>
        <end position="86"/>
    </location>
</feature>
<feature type="helix" evidence="4">
    <location>
        <begin position="87"/>
        <end position="101"/>
    </location>
</feature>
<feature type="helix" evidence="4">
    <location>
        <begin position="119"/>
        <end position="132"/>
    </location>
</feature>
<feature type="helix" evidence="4">
    <location>
        <begin position="147"/>
        <end position="155"/>
    </location>
</feature>
<feature type="helix" evidence="4">
    <location>
        <begin position="156"/>
        <end position="158"/>
    </location>
</feature>
<feature type="helix" evidence="4">
    <location>
        <begin position="168"/>
        <end position="176"/>
    </location>
</feature>
<feature type="helix" evidence="4">
    <location>
        <begin position="181"/>
        <end position="183"/>
    </location>
</feature>
<feature type="helix" evidence="4">
    <location>
        <begin position="200"/>
        <end position="209"/>
    </location>
</feature>
<feature type="helix" evidence="4">
    <location>
        <begin position="215"/>
        <end position="227"/>
    </location>
</feature>
<feature type="strand" evidence="4">
    <location>
        <begin position="232"/>
        <end position="236"/>
    </location>
</feature>
<feature type="helix" evidence="4">
    <location>
        <begin position="239"/>
        <end position="250"/>
    </location>
</feature>
<feature type="helix" evidence="4">
    <location>
        <begin position="260"/>
        <end position="275"/>
    </location>
</feature>
<feature type="turn" evidence="4">
    <location>
        <begin position="279"/>
        <end position="281"/>
    </location>
</feature>
<feature type="helix" evidence="4">
    <location>
        <begin position="294"/>
        <end position="306"/>
    </location>
</feature>
<feature type="helix" evidence="4">
    <location>
        <begin position="314"/>
        <end position="317"/>
    </location>
</feature>
<feature type="strand" evidence="4">
    <location>
        <begin position="322"/>
        <end position="325"/>
    </location>
</feature>
<feature type="helix" evidence="4">
    <location>
        <begin position="336"/>
        <end position="348"/>
    </location>
</feature>
<feature type="helix" evidence="4">
    <location>
        <begin position="356"/>
        <end position="367"/>
    </location>
</feature>
<feature type="strand" evidence="4">
    <location>
        <begin position="371"/>
        <end position="374"/>
    </location>
</feature>
<feature type="strand" evidence="4">
    <location>
        <begin position="379"/>
        <end position="382"/>
    </location>
</feature>
<feature type="helix" evidence="4">
    <location>
        <begin position="384"/>
        <end position="395"/>
    </location>
</feature>
<feature type="turn" evidence="4">
    <location>
        <begin position="396"/>
        <end position="398"/>
    </location>
</feature>
<feature type="helix" evidence="4">
    <location>
        <begin position="400"/>
        <end position="412"/>
    </location>
</feature>
<feature type="helix" evidence="4">
    <location>
        <begin position="429"/>
        <end position="446"/>
    </location>
</feature>
<feature type="helix" evidence="4">
    <location>
        <begin position="451"/>
        <end position="461"/>
    </location>
</feature>
<feature type="strand" evidence="4">
    <location>
        <begin position="473"/>
        <end position="479"/>
    </location>
</feature>
<feature type="helix" evidence="4">
    <location>
        <begin position="482"/>
        <end position="498"/>
    </location>
</feature>
<name>DITCY_MYCTU</name>
<organism>
    <name type="scientific">Mycobacterium tuberculosis (strain ATCC 25618 / H37Rv)</name>
    <dbReference type="NCBI Taxonomy" id="83332"/>
    <lineage>
        <taxon>Bacteria</taxon>
        <taxon>Bacillati</taxon>
        <taxon>Actinomycetota</taxon>
        <taxon>Actinomycetes</taxon>
        <taxon>Mycobacteriales</taxon>
        <taxon>Mycobacteriaceae</taxon>
        <taxon>Mycobacterium</taxon>
        <taxon>Mycobacterium tuberculosis complex</taxon>
    </lineage>
</organism>
<comment type="function">
    <text evidence="1 2">Catalyzes the formation of tuberculosinyl diphosphate from geranylgeranyl diphosphate (GGPP). It could also react with (14R/S)-14,15-oxidoGGPP to generate 3alpha- and 3beta-hydroxytuberculosinyl diphosphate.</text>
</comment>
<comment type="catalytic activity">
    <reaction evidence="1 2">
        <text>geranylgeranyl diphosphate = tuberculosinyl diphosphate</text>
        <dbReference type="Rhea" id="RHEA:25621"/>
        <dbReference type="ChEBI" id="CHEBI:57533"/>
        <dbReference type="ChEBI" id="CHEBI:58822"/>
        <dbReference type="EC" id="5.5.1.16"/>
    </reaction>
</comment>
<comment type="cofactor">
    <cofactor evidence="2">
        <name>Mg(2+)</name>
        <dbReference type="ChEBI" id="CHEBI:18420"/>
    </cofactor>
</comment>
<comment type="activity regulation">
    <text evidence="2">Strongly inhibited by 15-aza-dihydrogeranylgeraniol and 5-isopropyl-N,N,N,2-tetramethyl-4-(piperidine-1-carbonyloxy)benzenaminium chloride (Amo-1618). Inhibited by GGPP concentrations higher than 50 uM.</text>
</comment>
<comment type="biophysicochemical properties">
    <kinetics>
        <KM evidence="2">11.7 uM for GGPP (at 30 degrees Celsius and pH 7.5)</KM>
        <Vmax evidence="2">186.0 nmol/min/mg enzyme (at 30 degrees Celsius and pH 7.5)</Vmax>
    </kinetics>
    <phDependence>
        <text evidence="2">Optimum pH is 7.5. Enzyme activity is not detected at pH values above 9.0.</text>
    </phDependence>
    <temperatureDependence>
        <text evidence="2">Optimum temperature is 30 degrees Celsius.</text>
    </temperatureDependence>
</comment>
<comment type="subunit">
    <text evidence="2">Monomer.</text>
</comment>
<comment type="similarity">
    <text evidence="3">Belongs to the terpene synthase family.</text>
</comment>
<reference key="1">
    <citation type="journal article" date="1998" name="Nature">
        <title>Deciphering the biology of Mycobacterium tuberculosis from the complete genome sequence.</title>
        <authorList>
            <person name="Cole S.T."/>
            <person name="Brosch R."/>
            <person name="Parkhill J."/>
            <person name="Garnier T."/>
            <person name="Churcher C.M."/>
            <person name="Harris D.E."/>
            <person name="Gordon S.V."/>
            <person name="Eiglmeier K."/>
            <person name="Gas S."/>
            <person name="Barry C.E. III"/>
            <person name="Tekaia F."/>
            <person name="Badcock K."/>
            <person name="Basham D."/>
            <person name="Brown D."/>
            <person name="Chillingworth T."/>
            <person name="Connor R."/>
            <person name="Davies R.M."/>
            <person name="Devlin K."/>
            <person name="Feltwell T."/>
            <person name="Gentles S."/>
            <person name="Hamlin N."/>
            <person name="Holroyd S."/>
            <person name="Hornsby T."/>
            <person name="Jagels K."/>
            <person name="Krogh A."/>
            <person name="McLean J."/>
            <person name="Moule S."/>
            <person name="Murphy L.D."/>
            <person name="Oliver S."/>
            <person name="Osborne J."/>
            <person name="Quail M.A."/>
            <person name="Rajandream M.A."/>
            <person name="Rogers J."/>
            <person name="Rutter S."/>
            <person name="Seeger K."/>
            <person name="Skelton S."/>
            <person name="Squares S."/>
            <person name="Squares R."/>
            <person name="Sulston J.E."/>
            <person name="Taylor K."/>
            <person name="Whitehead S."/>
            <person name="Barrell B.G."/>
        </authorList>
    </citation>
    <scope>NUCLEOTIDE SEQUENCE [LARGE SCALE GENOMIC DNA]</scope>
    <source>
        <strain>ATCC 25618 / H37Rv</strain>
    </source>
</reference>
<reference key="2">
    <citation type="journal article" date="2005" name="Chem. Commun. (Camb.)">
        <title>Mycobacterium tuberculosis H37Rv3377c encodes the diterpene cyclase for producing the halimane skeleton.</title>
        <authorList>
            <person name="Nakano C."/>
            <person name="Okamura T."/>
            <person name="Sato T."/>
            <person name="Dairi T."/>
            <person name="Hoshino T."/>
        </authorList>
    </citation>
    <scope>FUNCTION AS A DITERPENE CYCLASE AND IN TUBERCULOSINOL BIOSYNTHESIS</scope>
    <scope>CATALYTIC ACTIVITY</scope>
    <scope>NOMENCLATURE</scope>
</reference>
<reference key="3">
    <citation type="journal article" date="2009" name="ChemBioChem">
        <title>Characterization of the Rv3377c gene product, a type-B diterpene cyclase, from the Mycobacterium tuberculosis H37 genome.</title>
        <authorList>
            <person name="Nakano C."/>
            <person name="Hoshino T."/>
        </authorList>
    </citation>
    <scope>FUNCTION AS A DITERPENE CYCLASE</scope>
    <scope>CATALYTIC ACTIVITY</scope>
    <scope>MUTAGENESIS OF GLU-292; ASP-293; ASP-295; THR-296 AND THR-297</scope>
    <scope>SUBSTRATE SPECIFICITY</scope>
    <scope>BIOPHYSICOCHEMICAL PROPERTIES</scope>
    <scope>COFACTOR</scope>
    <scope>SUBUNIT</scope>
    <scope>ACTIVITY REGULATION</scope>
</reference>
<reference key="4">
    <citation type="journal article" date="2011" name="Mol. Cell. Proteomics">
        <title>Proteogenomic analysis of Mycobacterium tuberculosis by high resolution mass spectrometry.</title>
        <authorList>
            <person name="Kelkar D.S."/>
            <person name="Kumar D."/>
            <person name="Kumar P."/>
            <person name="Balakrishnan L."/>
            <person name="Muthusamy B."/>
            <person name="Yadav A.K."/>
            <person name="Shrivastava P."/>
            <person name="Marimuthu A."/>
            <person name="Anand S."/>
            <person name="Sundaram H."/>
            <person name="Kingsbury R."/>
            <person name="Harsha H.C."/>
            <person name="Nair B."/>
            <person name="Prasad T.S."/>
            <person name="Chauhan D.S."/>
            <person name="Katoch K."/>
            <person name="Katoch V.M."/>
            <person name="Kumar P."/>
            <person name="Chaerkady R."/>
            <person name="Ramachandran S."/>
            <person name="Dash D."/>
            <person name="Pandey A."/>
        </authorList>
    </citation>
    <scope>IDENTIFICATION BY MASS SPECTROMETRY [LARGE SCALE ANALYSIS]</scope>
    <source>
        <strain>ATCC 25618 / H37Rv</strain>
    </source>
</reference>
<keyword id="KW-0002">3D-structure</keyword>
<keyword id="KW-0413">Isomerase</keyword>
<keyword id="KW-0456">Lyase</keyword>
<keyword id="KW-0460">Magnesium</keyword>
<keyword id="KW-0479">Metal-binding</keyword>
<keyword id="KW-1185">Reference proteome</keyword>
<protein>
    <recommendedName>
        <fullName>Type B diterpene cyclase</fullName>
        <ecNumber>5.5.1.16</ecNumber>
    </recommendedName>
</protein>
<proteinExistence type="evidence at protein level"/>